<accession>P0A403</accession>
<accession>P25903</accession>
<evidence type="ECO:0000255" key="1">
    <source>
        <dbReference type="HAMAP-Rule" id="MF_00828"/>
    </source>
</evidence>
<evidence type="ECO:0000305" key="2"/>
<evidence type="ECO:0007829" key="3">
    <source>
        <dbReference type="PDB" id="1JB0"/>
    </source>
</evidence>
<gene>
    <name evidence="1" type="primary">psaM</name>
    <name type="ordered locus">tsr0197</name>
</gene>
<protein>
    <recommendedName>
        <fullName evidence="1">Photosystem I reaction center subunit XII</fullName>
    </recommendedName>
    <alternativeName>
        <fullName evidence="1">PSI-M</fullName>
    </alternativeName>
</protein>
<proteinExistence type="evidence at protein level"/>
<organism>
    <name type="scientific">Thermosynechococcus vestitus (strain NIES-2133 / IAM M-273 / BP-1)</name>
    <dbReference type="NCBI Taxonomy" id="197221"/>
    <lineage>
        <taxon>Bacteria</taxon>
        <taxon>Bacillati</taxon>
        <taxon>Cyanobacteriota</taxon>
        <taxon>Cyanophyceae</taxon>
        <taxon>Acaryochloridales</taxon>
        <taxon>Thermosynechococcaceae</taxon>
        <taxon>Thermosynechococcus</taxon>
    </lineage>
</organism>
<comment type="subcellular location">
    <subcellularLocation>
        <location evidence="2">Cellular thylakoid membrane</location>
        <topology evidence="2">Single-pass membrane protein</topology>
    </subcellularLocation>
</comment>
<comment type="similarity">
    <text evidence="1">Belongs to the PsaM family.</text>
</comment>
<keyword id="KW-0002">3D-structure</keyword>
<keyword id="KW-0472">Membrane</keyword>
<keyword id="KW-0602">Photosynthesis</keyword>
<keyword id="KW-0603">Photosystem I</keyword>
<keyword id="KW-1185">Reference proteome</keyword>
<keyword id="KW-0793">Thylakoid</keyword>
<keyword id="KW-0812">Transmembrane</keyword>
<keyword id="KW-1133">Transmembrane helix</keyword>
<reference key="1">
    <citation type="journal article" date="2002" name="DNA Res.">
        <title>Complete genome structure of the thermophilic cyanobacterium Thermosynechococcus elongatus BP-1.</title>
        <authorList>
            <person name="Nakamura Y."/>
            <person name="Kaneko T."/>
            <person name="Sato S."/>
            <person name="Ikeuchi M."/>
            <person name="Katoh H."/>
            <person name="Sasamoto S."/>
            <person name="Watanabe A."/>
            <person name="Iriguchi M."/>
            <person name="Kawashima K."/>
            <person name="Kimura T."/>
            <person name="Kishida Y."/>
            <person name="Kiyokawa C."/>
            <person name="Kohara M."/>
            <person name="Matsumoto M."/>
            <person name="Matsuno A."/>
            <person name="Nakazaki N."/>
            <person name="Shimpo S."/>
            <person name="Sugimoto M."/>
            <person name="Takeuchi C."/>
            <person name="Yamada M."/>
            <person name="Tabata S."/>
        </authorList>
    </citation>
    <scope>NUCLEOTIDE SEQUENCE [LARGE SCALE GENOMIC DNA]</scope>
    <source>
        <strain>NIES-2133 / IAM M-273 / BP-1</strain>
    </source>
</reference>
<reference key="2">
    <citation type="journal article" date="1996" name="Nat. Struct. Biol.">
        <title>Photosystem I at 4-A resolution represents the first structural model of a joint photosynthetic reaction centre and core antenna system.</title>
        <authorList>
            <person name="Krauss N."/>
            <person name="Schubert W.-D."/>
            <person name="Klukas O."/>
            <person name="Fromme P."/>
            <person name="Witt H.T."/>
            <person name="Saenger W."/>
        </authorList>
    </citation>
    <scope>X-RAY CRYSTALLOGRAPHY (4.0 ANGSTROMS)</scope>
</reference>
<reference key="3">
    <citation type="journal article" date="2001" name="Nature">
        <title>Three-dimensional structure of cyanobacterial photosystem I at 2.5 A resolution.</title>
        <authorList>
            <person name="Jordan P."/>
            <person name="Fromme P."/>
            <person name="Witt H.T."/>
            <person name="Klukas O."/>
            <person name="Saenger W."/>
            <person name="Krauss N."/>
        </authorList>
    </citation>
    <scope>X-RAY CRYSTALLOGRAPHY (2.5 ANGSTROMS)</scope>
</reference>
<name>PSAM_THEVB</name>
<dbReference type="EMBL" id="BA000039">
    <property type="protein sequence ID" value="BAC07750.1"/>
    <property type="molecule type" value="Genomic_DNA"/>
</dbReference>
<dbReference type="RefSeq" id="NP_680988.1">
    <property type="nucleotide sequence ID" value="NC_004113.1"/>
</dbReference>
<dbReference type="RefSeq" id="WP_011056052.1">
    <property type="nucleotide sequence ID" value="NC_004113.1"/>
</dbReference>
<dbReference type="PDB" id="1JB0">
    <property type="method" value="X-ray"/>
    <property type="resolution" value="2.50 A"/>
    <property type="chains" value="M=1-31"/>
</dbReference>
<dbReference type="PDB" id="2PPS">
    <property type="method" value="X-ray"/>
    <property type="resolution" value="4.00 A"/>
</dbReference>
<dbReference type="PDB" id="3PCQ">
    <property type="method" value="X-ray"/>
    <property type="resolution" value="8.98 A"/>
    <property type="chains" value="M=1-31"/>
</dbReference>
<dbReference type="PDB" id="4FE1">
    <property type="method" value="X-ray"/>
    <property type="resolution" value="4.92 A"/>
    <property type="chains" value="M=1-31"/>
</dbReference>
<dbReference type="PDB" id="5ZF0">
    <property type="method" value="X-ray"/>
    <property type="resolution" value="4.20 A"/>
    <property type="chains" value="M1/M2/M3/M4/M5/M6=1-31"/>
</dbReference>
<dbReference type="PDB" id="6LU1">
    <property type="method" value="EM"/>
    <property type="resolution" value="3.20 A"/>
    <property type="chains" value="M=1-31"/>
</dbReference>
<dbReference type="PDB" id="6PFY">
    <property type="method" value="X-ray"/>
    <property type="resolution" value="2.90 A"/>
    <property type="chains" value="M/V/i=1-31"/>
</dbReference>
<dbReference type="PDB" id="6PGK">
    <property type="method" value="X-ray"/>
    <property type="resolution" value="2.90 A"/>
    <property type="chains" value="M/V/i=1-31"/>
</dbReference>
<dbReference type="PDB" id="6TRA">
    <property type="method" value="EM"/>
    <property type="resolution" value="2.85 A"/>
    <property type="chains" value="M=1-31"/>
</dbReference>
<dbReference type="PDB" id="6TRC">
    <property type="method" value="EM"/>
    <property type="resolution" value="2.98 A"/>
    <property type="chains" value="M/m/y=1-31"/>
</dbReference>
<dbReference type="PDB" id="6TRD">
    <property type="method" value="EM"/>
    <property type="resolution" value="3.16 A"/>
    <property type="chains" value="M/m/y=1-31"/>
</dbReference>
<dbReference type="PDB" id="7BW2">
    <property type="method" value="X-ray"/>
    <property type="resolution" value="6.50 A"/>
    <property type="chains" value="M=1-31"/>
</dbReference>
<dbReference type="PDB" id="7FIX">
    <property type="method" value="EM"/>
    <property type="resolution" value="1.97 A"/>
    <property type="chains" value="M1/M2/M3=1-31"/>
</dbReference>
<dbReference type="PDB" id="7M75">
    <property type="method" value="X-ray"/>
    <property type="resolution" value="2.75 A"/>
    <property type="chains" value="M=1-31"/>
</dbReference>
<dbReference type="PDB" id="7M76">
    <property type="method" value="X-ray"/>
    <property type="resolution" value="3.00 A"/>
    <property type="chains" value="M=1-31"/>
</dbReference>
<dbReference type="PDB" id="7M78">
    <property type="method" value="X-ray"/>
    <property type="resolution" value="3.00 A"/>
    <property type="chains" value="M=1-31"/>
</dbReference>
<dbReference type="PDBsum" id="1JB0"/>
<dbReference type="PDBsum" id="2PPS"/>
<dbReference type="PDBsum" id="3PCQ"/>
<dbReference type="PDBsum" id="4FE1"/>
<dbReference type="PDBsum" id="5ZF0"/>
<dbReference type="PDBsum" id="6LU1"/>
<dbReference type="PDBsum" id="6PFY"/>
<dbReference type="PDBsum" id="6PGK"/>
<dbReference type="PDBsum" id="6TRA"/>
<dbReference type="PDBsum" id="6TRC"/>
<dbReference type="PDBsum" id="6TRD"/>
<dbReference type="PDBsum" id="7BW2"/>
<dbReference type="PDBsum" id="7FIX"/>
<dbReference type="PDBsum" id="7M75"/>
<dbReference type="PDBsum" id="7M76"/>
<dbReference type="PDBsum" id="7M78"/>
<dbReference type="EMDB" id="EMD-0977"/>
<dbReference type="EMDB" id="EMD-10557"/>
<dbReference type="EMDB" id="EMD-10558"/>
<dbReference type="EMDB" id="EMD-10559"/>
<dbReference type="EMDB" id="EMD-31605"/>
<dbReference type="SMR" id="P0A403"/>
<dbReference type="IntAct" id="P0A403">
    <property type="interactions" value="1"/>
</dbReference>
<dbReference type="STRING" id="197221.gene:10746778"/>
<dbReference type="EnsemblBacteria" id="BAC07750">
    <property type="protein sequence ID" value="BAC07750"/>
    <property type="gene ID" value="BAC07750"/>
</dbReference>
<dbReference type="KEGG" id="tel:tsr0197"/>
<dbReference type="EvolutionaryTrace" id="P0A403"/>
<dbReference type="Proteomes" id="UP000000440">
    <property type="component" value="Chromosome"/>
</dbReference>
<dbReference type="GO" id="GO:0009522">
    <property type="term" value="C:photosystem I"/>
    <property type="evidence" value="ECO:0007669"/>
    <property type="project" value="UniProtKB-KW"/>
</dbReference>
<dbReference type="GO" id="GO:0031676">
    <property type="term" value="C:plasma membrane-derived thylakoid membrane"/>
    <property type="evidence" value="ECO:0007669"/>
    <property type="project" value="UniProtKB-SubCell"/>
</dbReference>
<dbReference type="GO" id="GO:0015979">
    <property type="term" value="P:photosynthesis"/>
    <property type="evidence" value="ECO:0007669"/>
    <property type="project" value="UniProtKB-UniRule"/>
</dbReference>
<dbReference type="HAMAP" id="MF_00828">
    <property type="entry name" value="PSI_PsaM"/>
    <property type="match status" value="1"/>
</dbReference>
<dbReference type="InterPro" id="IPR010010">
    <property type="entry name" value="PSI_PsaM"/>
</dbReference>
<dbReference type="InterPro" id="IPR037279">
    <property type="entry name" value="PSI_PsaM_sf"/>
</dbReference>
<dbReference type="NCBIfam" id="TIGR03053">
    <property type="entry name" value="PS_I_psaM"/>
    <property type="match status" value="1"/>
</dbReference>
<dbReference type="Pfam" id="PF07465">
    <property type="entry name" value="PsaM"/>
    <property type="match status" value="1"/>
</dbReference>
<dbReference type="SUPFAM" id="SSF81548">
    <property type="entry name" value="Subunit XII of photosystem I reaction centre, PsaM"/>
    <property type="match status" value="1"/>
</dbReference>
<feature type="chain" id="PRO_0000207769" description="Photosystem I reaction center subunit XII">
    <location>
        <begin position="1"/>
        <end position="31"/>
    </location>
</feature>
<feature type="transmembrane region" description="Helical" evidence="1">
    <location>
        <begin position="7"/>
        <end position="26"/>
    </location>
</feature>
<feature type="helix" evidence="3">
    <location>
        <begin position="5"/>
        <end position="29"/>
    </location>
</feature>
<sequence length="31" mass="3424">MALTDTQVYVALVIALLPAVLAFRLSTELYK</sequence>